<keyword id="KW-0067">ATP-binding</keyword>
<keyword id="KW-0418">Kinase</keyword>
<keyword id="KW-0545">Nucleotide biosynthesis</keyword>
<keyword id="KW-0547">Nucleotide-binding</keyword>
<keyword id="KW-0808">Transferase</keyword>
<proteinExistence type="inferred from homology"/>
<feature type="chain" id="PRO_1000076977" description="Thymidylate kinase">
    <location>
        <begin position="1"/>
        <end position="205"/>
    </location>
</feature>
<feature type="binding site" evidence="1">
    <location>
        <begin position="9"/>
        <end position="16"/>
    </location>
    <ligand>
        <name>ATP</name>
        <dbReference type="ChEBI" id="CHEBI:30616"/>
    </ligand>
</feature>
<dbReference type="EC" id="2.7.4.9" evidence="1"/>
<dbReference type="EMBL" id="CP000703">
    <property type="protein sequence ID" value="ABQ48307.1"/>
    <property type="molecule type" value="Genomic_DNA"/>
</dbReference>
<dbReference type="RefSeq" id="WP_001272126.1">
    <property type="nucleotide sequence ID" value="NC_009487.1"/>
</dbReference>
<dbReference type="SMR" id="A5IQ34"/>
<dbReference type="GeneID" id="98344796"/>
<dbReference type="KEGG" id="saj:SaurJH9_0503"/>
<dbReference type="HOGENOM" id="CLU_049131_0_2_9"/>
<dbReference type="GO" id="GO:0005829">
    <property type="term" value="C:cytosol"/>
    <property type="evidence" value="ECO:0007669"/>
    <property type="project" value="TreeGrafter"/>
</dbReference>
<dbReference type="GO" id="GO:0005524">
    <property type="term" value="F:ATP binding"/>
    <property type="evidence" value="ECO:0007669"/>
    <property type="project" value="UniProtKB-UniRule"/>
</dbReference>
<dbReference type="GO" id="GO:0004798">
    <property type="term" value="F:dTMP kinase activity"/>
    <property type="evidence" value="ECO:0007669"/>
    <property type="project" value="UniProtKB-UniRule"/>
</dbReference>
<dbReference type="GO" id="GO:0006233">
    <property type="term" value="P:dTDP biosynthetic process"/>
    <property type="evidence" value="ECO:0007669"/>
    <property type="project" value="InterPro"/>
</dbReference>
<dbReference type="GO" id="GO:0006235">
    <property type="term" value="P:dTTP biosynthetic process"/>
    <property type="evidence" value="ECO:0007669"/>
    <property type="project" value="UniProtKB-UniRule"/>
</dbReference>
<dbReference type="GO" id="GO:0006227">
    <property type="term" value="P:dUDP biosynthetic process"/>
    <property type="evidence" value="ECO:0007669"/>
    <property type="project" value="TreeGrafter"/>
</dbReference>
<dbReference type="CDD" id="cd01672">
    <property type="entry name" value="TMPK"/>
    <property type="match status" value="1"/>
</dbReference>
<dbReference type="FunFam" id="3.40.50.300:FF:000225">
    <property type="entry name" value="Thymidylate kinase"/>
    <property type="match status" value="1"/>
</dbReference>
<dbReference type="Gene3D" id="3.40.50.300">
    <property type="entry name" value="P-loop containing nucleotide triphosphate hydrolases"/>
    <property type="match status" value="1"/>
</dbReference>
<dbReference type="HAMAP" id="MF_00165">
    <property type="entry name" value="Thymidylate_kinase"/>
    <property type="match status" value="1"/>
</dbReference>
<dbReference type="InterPro" id="IPR027417">
    <property type="entry name" value="P-loop_NTPase"/>
</dbReference>
<dbReference type="InterPro" id="IPR039430">
    <property type="entry name" value="Thymidylate_kin-like_dom"/>
</dbReference>
<dbReference type="InterPro" id="IPR018095">
    <property type="entry name" value="Thymidylate_kin_CS"/>
</dbReference>
<dbReference type="InterPro" id="IPR018094">
    <property type="entry name" value="Thymidylate_kinase"/>
</dbReference>
<dbReference type="NCBIfam" id="TIGR00041">
    <property type="entry name" value="DTMP_kinase"/>
    <property type="match status" value="1"/>
</dbReference>
<dbReference type="PANTHER" id="PTHR10344">
    <property type="entry name" value="THYMIDYLATE KINASE"/>
    <property type="match status" value="1"/>
</dbReference>
<dbReference type="PANTHER" id="PTHR10344:SF4">
    <property type="entry name" value="UMP-CMP KINASE 2, MITOCHONDRIAL"/>
    <property type="match status" value="1"/>
</dbReference>
<dbReference type="Pfam" id="PF02223">
    <property type="entry name" value="Thymidylate_kin"/>
    <property type="match status" value="1"/>
</dbReference>
<dbReference type="SUPFAM" id="SSF52540">
    <property type="entry name" value="P-loop containing nucleoside triphosphate hydrolases"/>
    <property type="match status" value="1"/>
</dbReference>
<dbReference type="PROSITE" id="PS01331">
    <property type="entry name" value="THYMIDYLATE_KINASE"/>
    <property type="match status" value="1"/>
</dbReference>
<sequence>MSAFITFEGPEGSGKTTVINEVYHRLVKDYDVIMTREPGGVPTGEEIRKIVLEGNDMDIRTEAMLFAASRREHLVLKVIPALKEGKVVLCDRYIDSSLAYQGYARGIGVEEVRALNEFAINGLYPDLTIYLNVSAEVGRERIIKNSRDQNRLDQEDLKFHEKVIEGYQEIIHNESQRFKSVNADQPLENVVEDTYQTIIKYLEKI</sequence>
<reference key="1">
    <citation type="submission" date="2007-05" db="EMBL/GenBank/DDBJ databases">
        <title>Complete sequence of chromosome of Staphylococcus aureus subsp. aureus JH9.</title>
        <authorList>
            <consortium name="US DOE Joint Genome Institute"/>
            <person name="Copeland A."/>
            <person name="Lucas S."/>
            <person name="Lapidus A."/>
            <person name="Barry K."/>
            <person name="Detter J.C."/>
            <person name="Glavina del Rio T."/>
            <person name="Hammon N."/>
            <person name="Israni S."/>
            <person name="Pitluck S."/>
            <person name="Chain P."/>
            <person name="Malfatti S."/>
            <person name="Shin M."/>
            <person name="Vergez L."/>
            <person name="Schmutz J."/>
            <person name="Larimer F."/>
            <person name="Land M."/>
            <person name="Hauser L."/>
            <person name="Kyrpides N."/>
            <person name="Kim E."/>
            <person name="Tomasz A."/>
            <person name="Richardson P."/>
        </authorList>
    </citation>
    <scope>NUCLEOTIDE SEQUENCE [LARGE SCALE GENOMIC DNA]</scope>
    <source>
        <strain>JH9</strain>
    </source>
</reference>
<protein>
    <recommendedName>
        <fullName evidence="1">Thymidylate kinase</fullName>
        <ecNumber evidence="1">2.7.4.9</ecNumber>
    </recommendedName>
    <alternativeName>
        <fullName evidence="1">dTMP kinase</fullName>
    </alternativeName>
</protein>
<evidence type="ECO:0000255" key="1">
    <source>
        <dbReference type="HAMAP-Rule" id="MF_00165"/>
    </source>
</evidence>
<name>KTHY_STAA9</name>
<comment type="function">
    <text evidence="1">Phosphorylation of dTMP to form dTDP in both de novo and salvage pathways of dTTP synthesis.</text>
</comment>
<comment type="catalytic activity">
    <reaction evidence="1">
        <text>dTMP + ATP = dTDP + ADP</text>
        <dbReference type="Rhea" id="RHEA:13517"/>
        <dbReference type="ChEBI" id="CHEBI:30616"/>
        <dbReference type="ChEBI" id="CHEBI:58369"/>
        <dbReference type="ChEBI" id="CHEBI:63528"/>
        <dbReference type="ChEBI" id="CHEBI:456216"/>
        <dbReference type="EC" id="2.7.4.9"/>
    </reaction>
</comment>
<comment type="similarity">
    <text evidence="1">Belongs to the thymidylate kinase family.</text>
</comment>
<accession>A5IQ34</accession>
<gene>
    <name evidence="1" type="primary">tmk</name>
    <name type="ordered locus">SaurJH9_0503</name>
</gene>
<organism>
    <name type="scientific">Staphylococcus aureus (strain JH9)</name>
    <dbReference type="NCBI Taxonomy" id="359786"/>
    <lineage>
        <taxon>Bacteria</taxon>
        <taxon>Bacillati</taxon>
        <taxon>Bacillota</taxon>
        <taxon>Bacilli</taxon>
        <taxon>Bacillales</taxon>
        <taxon>Staphylococcaceae</taxon>
        <taxon>Staphylococcus</taxon>
    </lineage>
</organism>